<keyword id="KW-0125">Carotenoid biosynthesis</keyword>
<keyword id="KW-0238">DNA-binding</keyword>
<keyword id="KW-0678">Repressor</keyword>
<keyword id="KW-0804">Transcription</keyword>
<keyword id="KW-0805">Transcription regulation</keyword>
<gene>
    <name type="primary">carA</name>
</gene>
<reference key="1">
    <citation type="journal article" date="1995" name="Eur. J. Biochem.">
        <title>A cluster of structural and regulatory genes for light-induced carotenogenesis in Myxococcus xanthus.</title>
        <authorList>
            <person name="Botella J.A."/>
            <person name="Murillo F.J."/>
            <person name="Ruiz-Vazquez R.M."/>
        </authorList>
    </citation>
    <scope>NUCLEOTIDE SEQUENCE [GENOMIC DNA]</scope>
    <source>
        <strain>DK1050</strain>
    </source>
</reference>
<reference key="2">
    <citation type="journal article" date="2002" name="J. Bacteriol.">
        <title>Role for vitamin B(12) in light induction of gene expression in the bacterium Myxococcus xanthus.</title>
        <authorList>
            <person name="Cervantes M."/>
            <person name="Murillo F.J."/>
        </authorList>
    </citation>
    <scope>FUNCTION</scope>
    <scope>DISRUPTION PHENOTYPE</scope>
    <source>
        <strain>DK1050</strain>
    </source>
</reference>
<reference key="3">
    <citation type="journal article" date="2002" name="J. Biol. Chem.">
        <title>A repressor-antirepressor pair links two loci controlling light-induced carotenogenesis in Myxococcus xanthus.</title>
        <authorList>
            <person name="Lopez-Rubio J.J."/>
            <person name="Elias-Arnanz M."/>
            <person name="Padmanabhan S."/>
            <person name="Murillo F.J."/>
        </authorList>
    </citation>
    <scope>FUNCTION</scope>
    <scope>DNA-BINDING</scope>
    <scope>ACTIVITY REGULATION</scope>
    <scope>SUBUNIT</scope>
    <scope>INTERACTION WITH CARS</scope>
    <scope>DOMAIN</scope>
    <source>
        <strain>DK1050</strain>
    </source>
</reference>
<reference key="4">
    <citation type="journal article" date="2008" name="Mol. Microbiol.">
        <title>Vitamin B12 partners the CarH repressor to downregulate a photoinducible promoter in Myxococcus xanthus.</title>
        <authorList>
            <person name="Perez-Marin M.C."/>
            <person name="Padmanabhan S."/>
            <person name="Polanco M.C."/>
            <person name="Murillo F.J."/>
            <person name="Elias-Arnanz M."/>
        </authorList>
    </citation>
    <scope>FUNCTION</scope>
    <scope>DNA-BINDING</scope>
    <scope>ACTIVITY REGULATION</scope>
    <scope>DOMAIN</scope>
    <scope>MUTAGENESIS OF 174-HIS-HIS-175; HIS-175 AND 249-GLY-GLY-250</scope>
    <source>
        <strain>DK1050</strain>
    </source>
</reference>
<organism>
    <name type="scientific">Myxococcus xanthus</name>
    <dbReference type="NCBI Taxonomy" id="34"/>
    <lineage>
        <taxon>Bacteria</taxon>
        <taxon>Pseudomonadati</taxon>
        <taxon>Myxococcota</taxon>
        <taxon>Myxococcia</taxon>
        <taxon>Myxococcales</taxon>
        <taxon>Cystobacterineae</taxon>
        <taxon>Myxococcaceae</taxon>
        <taxon>Myxococcus</taxon>
    </lineage>
</organism>
<name>CARA_MYXXA</name>
<feature type="chain" id="PRO_0000429422" description="HTH-type transcriptional repressor CarA">
    <location>
        <begin position="1"/>
        <end position="288"/>
    </location>
</feature>
<feature type="domain" description="HTH merR-type" evidence="1">
    <location>
        <begin position="2"/>
        <end position="73"/>
    </location>
</feature>
<feature type="domain" description="B12-binding" evidence="2">
    <location>
        <begin position="162"/>
        <end position="288"/>
    </location>
</feature>
<feature type="DNA-binding region" description="H-T-H motif" evidence="1">
    <location>
        <begin position="5"/>
        <end position="24"/>
    </location>
</feature>
<feature type="mutagenesis site" description="Does not affect activity." evidence="5">
    <original>HH</original>
    <variation>AA</variation>
    <location>
        <begin position="174"/>
        <end position="175"/>
    </location>
</feature>
<feature type="mutagenesis site" description="Does not affect activity." evidence="5">
    <original>H</original>
    <variation>A</variation>
    <location>
        <position position="175"/>
    </location>
</feature>
<feature type="mutagenesis site" description="Does not affect activity." evidence="5">
    <original>GG</original>
    <variation>AA</variation>
    <location>
        <begin position="249"/>
        <end position="250"/>
    </location>
</feature>
<evidence type="ECO:0000255" key="1">
    <source>
        <dbReference type="PROSITE-ProRule" id="PRU00254"/>
    </source>
</evidence>
<evidence type="ECO:0000255" key="2">
    <source>
        <dbReference type="PROSITE-ProRule" id="PRU00666"/>
    </source>
</evidence>
<evidence type="ECO:0000269" key="3">
    <source>
    </source>
</evidence>
<evidence type="ECO:0000269" key="4">
    <source>
    </source>
</evidence>
<evidence type="ECO:0000269" key="5">
    <source>
    </source>
</evidence>
<evidence type="ECO:0000305" key="6"/>
<proteinExistence type="evidence at protein level"/>
<protein>
    <recommendedName>
        <fullName>HTH-type transcriptional repressor CarA</fullName>
    </recommendedName>
</protein>
<sequence>MTLRIRTIARMTGIREATLRAWERRYGFPRPLRSEGNNYRVYSREEVEAVRRVARLIQEEGLSVSEAIAQVKTEPPREQPEAERLRERFWSSVGALEGDEVTRVLDDAQTVMDVEAYCDGFLLPLLREMGVRLDVAREHLASALIRQRLRQVYDALSPAPAGPRALLACPSGDHHEGGLLVLGIHLKRKGWRVTMLGADTPAAALQGACVQVRPDVVALSFVRARAPEEFASVLEDALRACAPFPVVVGGLGAREHLKAIFSLGAQYAESSEELVAIWNQVRNAQNRP</sequence>
<accession>Q50899</accession>
<dbReference type="EMBL" id="Z21955">
    <property type="protein sequence ID" value="CAA79964.1"/>
    <property type="molecule type" value="Genomic_DNA"/>
</dbReference>
<dbReference type="PIR" id="S68197">
    <property type="entry name" value="S68197"/>
</dbReference>
<dbReference type="RefSeq" id="WP_011551024.1">
    <property type="nucleotide sequence ID" value="NZ_JABFNQ010000052.1"/>
</dbReference>
<dbReference type="BMRB" id="Q50899"/>
<dbReference type="SMR" id="Q50899"/>
<dbReference type="OMA" id="GDVRQEC"/>
<dbReference type="GO" id="GO:0031419">
    <property type="term" value="F:cobalamin binding"/>
    <property type="evidence" value="ECO:0007669"/>
    <property type="project" value="InterPro"/>
</dbReference>
<dbReference type="GO" id="GO:0003677">
    <property type="term" value="F:DNA binding"/>
    <property type="evidence" value="ECO:0007669"/>
    <property type="project" value="UniProtKB-KW"/>
</dbReference>
<dbReference type="GO" id="GO:0003700">
    <property type="term" value="F:DNA-binding transcription factor activity"/>
    <property type="evidence" value="ECO:0007669"/>
    <property type="project" value="InterPro"/>
</dbReference>
<dbReference type="GO" id="GO:0046872">
    <property type="term" value="F:metal ion binding"/>
    <property type="evidence" value="ECO:0007669"/>
    <property type="project" value="InterPro"/>
</dbReference>
<dbReference type="GO" id="GO:0016117">
    <property type="term" value="P:carotenoid biosynthetic process"/>
    <property type="evidence" value="ECO:0007669"/>
    <property type="project" value="UniProtKB-KW"/>
</dbReference>
<dbReference type="CDD" id="cd02065">
    <property type="entry name" value="B12-binding_like"/>
    <property type="match status" value="1"/>
</dbReference>
<dbReference type="CDD" id="cd01104">
    <property type="entry name" value="HTH_MlrA-CarA"/>
    <property type="match status" value="1"/>
</dbReference>
<dbReference type="Gene3D" id="1.10.1660.10">
    <property type="match status" value="1"/>
</dbReference>
<dbReference type="Gene3D" id="3.40.50.280">
    <property type="entry name" value="Cobalamin-binding domain"/>
    <property type="match status" value="1"/>
</dbReference>
<dbReference type="Gene3D" id="1.10.1240.10">
    <property type="entry name" value="Methionine synthase domain"/>
    <property type="match status" value="1"/>
</dbReference>
<dbReference type="InterPro" id="IPR006158">
    <property type="entry name" value="Cobalamin-bd"/>
</dbReference>
<dbReference type="InterPro" id="IPR036724">
    <property type="entry name" value="Cobalamin-bd_sf"/>
</dbReference>
<dbReference type="InterPro" id="IPR009061">
    <property type="entry name" value="DNA-bd_dom_put_sf"/>
</dbReference>
<dbReference type="InterPro" id="IPR000551">
    <property type="entry name" value="MerR-type_HTH_dom"/>
</dbReference>
<dbReference type="InterPro" id="IPR047057">
    <property type="entry name" value="MerR_fam"/>
</dbReference>
<dbReference type="InterPro" id="IPR036594">
    <property type="entry name" value="Meth_synthase_dom"/>
</dbReference>
<dbReference type="PANTHER" id="PTHR30204:SF67">
    <property type="entry name" value="HTH-TYPE TRANSCRIPTIONAL REGULATOR MLRA-RELATED"/>
    <property type="match status" value="1"/>
</dbReference>
<dbReference type="PANTHER" id="PTHR30204">
    <property type="entry name" value="REDOX-CYCLING DRUG-SENSING TRANSCRIPTIONAL ACTIVATOR SOXR"/>
    <property type="match status" value="1"/>
</dbReference>
<dbReference type="Pfam" id="PF02310">
    <property type="entry name" value="B12-binding"/>
    <property type="match status" value="1"/>
</dbReference>
<dbReference type="Pfam" id="PF13411">
    <property type="entry name" value="MerR_1"/>
    <property type="match status" value="1"/>
</dbReference>
<dbReference type="SMART" id="SM00422">
    <property type="entry name" value="HTH_MERR"/>
    <property type="match status" value="1"/>
</dbReference>
<dbReference type="SUPFAM" id="SSF52242">
    <property type="entry name" value="Cobalamin (vitamin B12)-binding domain"/>
    <property type="match status" value="1"/>
</dbReference>
<dbReference type="SUPFAM" id="SSF46955">
    <property type="entry name" value="Putative DNA-binding domain"/>
    <property type="match status" value="1"/>
</dbReference>
<dbReference type="PROSITE" id="PS51332">
    <property type="entry name" value="B12_BINDING"/>
    <property type="match status" value="1"/>
</dbReference>
<dbReference type="PROSITE" id="PS50937">
    <property type="entry name" value="HTH_MERR_2"/>
    <property type="match status" value="1"/>
</dbReference>
<comment type="function">
    <text evidence="3 4 5">Negative regulator of the carB operon in the dark. Binds specifically to the CarA operator, in the region around the carB promoter, which blocks access to the RNA polymerase.</text>
</comment>
<comment type="activity regulation">
    <text evidence="3 5">Binds cobalamin (vitamin B12), but cobalamin is not required for CarA activity. Interaction with CarS prevents binding to DNA.</text>
</comment>
<comment type="subunit">
    <text evidence="3">Forms homodimers or oligomers. Interacts with CarS.</text>
</comment>
<comment type="domain">
    <text evidence="3 5">The N-terminal region interacts with DNA and CarS, and the C-terminal region is involved in oligomerization and binding of cobalamin.</text>
</comment>
<comment type="disruption phenotype">
    <text evidence="4">Deletion causes light-independent expression from the carB promoter.</text>
</comment>
<comment type="similarity">
    <text evidence="6">Belongs to the CarA/CarH B12-binding photoregulator family.</text>
</comment>